<reference key="1">
    <citation type="journal article" date="2006" name="Mol. Microbiol.">
        <title>Role of pathogenicity island-associated integrases in the genome plasticity of uropathogenic Escherichia coli strain 536.</title>
        <authorList>
            <person name="Hochhut B."/>
            <person name="Wilde C."/>
            <person name="Balling G."/>
            <person name="Middendorf B."/>
            <person name="Dobrindt U."/>
            <person name="Brzuszkiewicz E."/>
            <person name="Gottschalk G."/>
            <person name="Carniel E."/>
            <person name="Hacker J."/>
        </authorList>
    </citation>
    <scope>NUCLEOTIDE SEQUENCE [LARGE SCALE GENOMIC DNA]</scope>
    <source>
        <strain>536 / UPEC</strain>
    </source>
</reference>
<accession>Q0TH12</accession>
<name>MNTP_ECOL5</name>
<proteinExistence type="inferred from homology"/>
<organism>
    <name type="scientific">Escherichia coli O6:K15:H31 (strain 536 / UPEC)</name>
    <dbReference type="NCBI Taxonomy" id="362663"/>
    <lineage>
        <taxon>Bacteria</taxon>
        <taxon>Pseudomonadati</taxon>
        <taxon>Pseudomonadota</taxon>
        <taxon>Gammaproteobacteria</taxon>
        <taxon>Enterobacterales</taxon>
        <taxon>Enterobacteriaceae</taxon>
        <taxon>Escherichia</taxon>
    </lineage>
</organism>
<evidence type="ECO:0000255" key="1">
    <source>
        <dbReference type="HAMAP-Rule" id="MF_01521"/>
    </source>
</evidence>
<sequence>MNITATVLLAFGMSMDAFAASIGKGATLHKPKFSEALRTGLIFGAVETLTPLIGWGMGMLASRFVLEWNHWIAFVLLIFLGGRMIIEGFRGADDEDEEPRRRHGFWLLVTTAIATSLDAMAVGVGLAFLQVNIIATALAIGCATLIMSTLGMMVGRFIGSIIGKKAEILGGLVLIGIGVQILWTHFHG</sequence>
<gene>
    <name evidence="1" type="primary">mntP</name>
    <name type="synonym">yebN</name>
    <name type="ordered locus">ECP_1764</name>
</gene>
<protein>
    <recommendedName>
        <fullName evidence="1">Probable manganese efflux pump MntP</fullName>
    </recommendedName>
</protein>
<comment type="function">
    <text evidence="1">Probably functions as a manganese efflux pump.</text>
</comment>
<comment type="subcellular location">
    <subcellularLocation>
        <location evidence="1">Cell inner membrane</location>
        <topology evidence="1">Multi-pass membrane protein</topology>
    </subcellularLocation>
</comment>
<comment type="similarity">
    <text evidence="1">Belongs to the MntP (TC 9.B.29) family.</text>
</comment>
<dbReference type="EMBL" id="CP000247">
    <property type="protein sequence ID" value="ABG69767.1"/>
    <property type="molecule type" value="Genomic_DNA"/>
</dbReference>
<dbReference type="RefSeq" id="WP_001296134.1">
    <property type="nucleotide sequence ID" value="NC_008253.1"/>
</dbReference>
<dbReference type="GeneID" id="93776070"/>
<dbReference type="KEGG" id="ecp:ECP_1764"/>
<dbReference type="HOGENOM" id="CLU_096410_0_0_6"/>
<dbReference type="Proteomes" id="UP000009182">
    <property type="component" value="Chromosome"/>
</dbReference>
<dbReference type="GO" id="GO:0005886">
    <property type="term" value="C:plasma membrane"/>
    <property type="evidence" value="ECO:0007669"/>
    <property type="project" value="UniProtKB-SubCell"/>
</dbReference>
<dbReference type="GO" id="GO:0005384">
    <property type="term" value="F:manganese ion transmembrane transporter activity"/>
    <property type="evidence" value="ECO:0007669"/>
    <property type="project" value="UniProtKB-UniRule"/>
</dbReference>
<dbReference type="HAMAP" id="MF_01521">
    <property type="entry name" value="MntP_pump"/>
    <property type="match status" value="1"/>
</dbReference>
<dbReference type="InterPro" id="IPR003810">
    <property type="entry name" value="Mntp/YtaF"/>
</dbReference>
<dbReference type="InterPro" id="IPR022929">
    <property type="entry name" value="Put_MntP"/>
</dbReference>
<dbReference type="NCBIfam" id="NF008546">
    <property type="entry name" value="PRK11469.1"/>
    <property type="match status" value="1"/>
</dbReference>
<dbReference type="PANTHER" id="PTHR35529">
    <property type="entry name" value="MANGANESE EFFLUX PUMP MNTP-RELATED"/>
    <property type="match status" value="1"/>
</dbReference>
<dbReference type="PANTHER" id="PTHR35529:SF1">
    <property type="entry name" value="MANGANESE EFFLUX PUMP MNTP-RELATED"/>
    <property type="match status" value="1"/>
</dbReference>
<dbReference type="Pfam" id="PF02659">
    <property type="entry name" value="Mntp"/>
    <property type="match status" value="1"/>
</dbReference>
<feature type="chain" id="PRO_0000296928" description="Probable manganese efflux pump MntP">
    <location>
        <begin position="1"/>
        <end position="188"/>
    </location>
</feature>
<feature type="transmembrane region" description="Helical" evidence="1">
    <location>
        <begin position="3"/>
        <end position="23"/>
    </location>
</feature>
<feature type="transmembrane region" description="Helical" evidence="1">
    <location>
        <begin position="66"/>
        <end position="86"/>
    </location>
</feature>
<feature type="transmembrane region" description="Helical" evidence="1">
    <location>
        <begin position="106"/>
        <end position="128"/>
    </location>
</feature>
<feature type="transmembrane region" description="Helical" evidence="1">
    <location>
        <begin position="143"/>
        <end position="163"/>
    </location>
</feature>
<feature type="transmembrane region" description="Helical" evidence="1">
    <location>
        <begin position="168"/>
        <end position="188"/>
    </location>
</feature>
<keyword id="KW-0997">Cell inner membrane</keyword>
<keyword id="KW-1003">Cell membrane</keyword>
<keyword id="KW-0406">Ion transport</keyword>
<keyword id="KW-0464">Manganese</keyword>
<keyword id="KW-0472">Membrane</keyword>
<keyword id="KW-0812">Transmembrane</keyword>
<keyword id="KW-1133">Transmembrane helix</keyword>
<keyword id="KW-0813">Transport</keyword>